<accession>Q9FDM1</accession>
<accession>Q5NQT9</accession>
<protein>
    <recommendedName>
        <fullName evidence="1">Phosphatidylglycerol--prolipoprotein diacylglyceryl transferase</fullName>
        <ecNumber evidence="1">2.5.1.145</ecNumber>
    </recommendedName>
</protein>
<reference key="1">
    <citation type="submission" date="1999-12" db="EMBL/GenBank/DDBJ databases">
        <authorList>
            <person name="Lee H.J."/>
            <person name="Kang H.S."/>
        </authorList>
    </citation>
    <scope>NUCLEOTIDE SEQUENCE [GENOMIC DNA]</scope>
    <source>
        <strain>ATCC 31821 / ZM4 / CP4</strain>
    </source>
</reference>
<reference key="2">
    <citation type="journal article" date="2005" name="Nat. Biotechnol.">
        <title>The genome sequence of the ethanologenic bacterium Zymomonas mobilis ZM4.</title>
        <authorList>
            <person name="Seo J.-S."/>
            <person name="Chong H."/>
            <person name="Park H.S."/>
            <person name="Yoon K.-O."/>
            <person name="Jung C."/>
            <person name="Kim J.J."/>
            <person name="Hong J.H."/>
            <person name="Kim H."/>
            <person name="Kim J.-H."/>
            <person name="Kil J.-I."/>
            <person name="Park C.J."/>
            <person name="Oh H.-M."/>
            <person name="Lee J.-S."/>
            <person name="Jin S.-J."/>
            <person name="Um H.-W."/>
            <person name="Lee H.-J."/>
            <person name="Oh S.-J."/>
            <person name="Kim J.Y."/>
            <person name="Kang H.L."/>
            <person name="Lee S.Y."/>
            <person name="Lee K.J."/>
            <person name="Kang H.S."/>
        </authorList>
    </citation>
    <scope>NUCLEOTIDE SEQUENCE [LARGE SCALE GENOMIC DNA]</scope>
    <source>
        <strain>ATCC 31821 / ZM4 / CP4</strain>
    </source>
</reference>
<feature type="chain" id="PRO_0000172724" description="Phosphatidylglycerol--prolipoprotein diacylglyceryl transferase">
    <location>
        <begin position="1"/>
        <end position="285"/>
    </location>
</feature>
<feature type="transmembrane region" description="Helical" evidence="1">
    <location>
        <begin position="17"/>
        <end position="37"/>
    </location>
</feature>
<feature type="transmembrane region" description="Helical" evidence="1">
    <location>
        <begin position="43"/>
        <end position="63"/>
    </location>
</feature>
<feature type="transmembrane region" description="Helical" evidence="1">
    <location>
        <begin position="78"/>
        <end position="98"/>
    </location>
</feature>
<feature type="transmembrane region" description="Helical" evidence="1">
    <location>
        <begin position="113"/>
        <end position="133"/>
    </location>
</feature>
<feature type="transmembrane region" description="Helical" evidence="1">
    <location>
        <begin position="139"/>
        <end position="159"/>
    </location>
</feature>
<feature type="transmembrane region" description="Helical" evidence="1">
    <location>
        <begin position="195"/>
        <end position="215"/>
    </location>
</feature>
<feature type="transmembrane region" description="Helical" evidence="1">
    <location>
        <begin position="223"/>
        <end position="243"/>
    </location>
</feature>
<feature type="transmembrane region" description="Helical" evidence="1">
    <location>
        <begin position="256"/>
        <end position="276"/>
    </location>
</feature>
<feature type="binding site" evidence="1">
    <location>
        <position position="160"/>
    </location>
    <ligand>
        <name>a 1,2-diacyl-sn-glycero-3-phospho-(1'-sn-glycerol)</name>
        <dbReference type="ChEBI" id="CHEBI:64716"/>
    </ligand>
</feature>
<keyword id="KW-0997">Cell inner membrane</keyword>
<keyword id="KW-1003">Cell membrane</keyword>
<keyword id="KW-0472">Membrane</keyword>
<keyword id="KW-1185">Reference proteome</keyword>
<keyword id="KW-0808">Transferase</keyword>
<keyword id="KW-0812">Transmembrane</keyword>
<keyword id="KW-1133">Transmembrane helix</keyword>
<proteinExistence type="inferred from homology"/>
<name>LGT_ZYMMO</name>
<sequence>MPFAFIEQMKSVIHFDALGLSPIAFDLGVWHLFGLTLHPLIHWYALAYITGILLAWRYVLFLLKQPGTPMKPEQTDDLVFWSTLGILVGGRLAYVLFYQPAILENPLEIFKLWEGGMSYHGGMIGVFLAIWWVKTTNHLSWLRIADYIGCAAPIGLFLGRLANFVNGELWGRPSTMPWAVIFPQAGALPRHPSQLYEAGLEGILLFAFLNYQFFATKARLHPGKLAGFFLVGYGLSRFIVEWFREPDVQLGTLSWGLTMGQTLTIPMVIAGLWLIITSKKREISL</sequence>
<gene>
    <name evidence="1" type="primary">lgt</name>
    <name type="ordered locus">ZMO0291</name>
</gene>
<comment type="function">
    <text evidence="1">Catalyzes the transfer of the diacylglyceryl group from phosphatidylglycerol to the sulfhydryl group of the N-terminal cysteine of a prolipoprotein, the first step in the formation of mature lipoproteins.</text>
</comment>
<comment type="catalytic activity">
    <reaction evidence="1">
        <text>L-cysteinyl-[prolipoprotein] + a 1,2-diacyl-sn-glycero-3-phospho-(1'-sn-glycerol) = an S-1,2-diacyl-sn-glyceryl-L-cysteinyl-[prolipoprotein] + sn-glycerol 1-phosphate + H(+)</text>
        <dbReference type="Rhea" id="RHEA:56712"/>
        <dbReference type="Rhea" id="RHEA-COMP:14679"/>
        <dbReference type="Rhea" id="RHEA-COMP:14680"/>
        <dbReference type="ChEBI" id="CHEBI:15378"/>
        <dbReference type="ChEBI" id="CHEBI:29950"/>
        <dbReference type="ChEBI" id="CHEBI:57685"/>
        <dbReference type="ChEBI" id="CHEBI:64716"/>
        <dbReference type="ChEBI" id="CHEBI:140658"/>
        <dbReference type="EC" id="2.5.1.145"/>
    </reaction>
</comment>
<comment type="pathway">
    <text evidence="1">Protein modification; lipoprotein biosynthesis (diacylglyceryl transfer).</text>
</comment>
<comment type="subcellular location">
    <subcellularLocation>
        <location evidence="1">Cell inner membrane</location>
        <topology evidence="1">Multi-pass membrane protein</topology>
    </subcellularLocation>
</comment>
<comment type="similarity">
    <text evidence="1">Belongs to the Lgt family.</text>
</comment>
<comment type="sequence caution" evidence="2">
    <conflict type="erroneous initiation">
        <sequence resource="EMBL-CDS" id="AAG02148"/>
    </conflict>
</comment>
<evidence type="ECO:0000255" key="1">
    <source>
        <dbReference type="HAMAP-Rule" id="MF_01147"/>
    </source>
</evidence>
<evidence type="ECO:0000305" key="2"/>
<organism>
    <name type="scientific">Zymomonas mobilis subsp. mobilis (strain ATCC 31821 / ZM4 / CP4)</name>
    <dbReference type="NCBI Taxonomy" id="264203"/>
    <lineage>
        <taxon>Bacteria</taxon>
        <taxon>Pseudomonadati</taxon>
        <taxon>Pseudomonadota</taxon>
        <taxon>Alphaproteobacteria</taxon>
        <taxon>Sphingomonadales</taxon>
        <taxon>Zymomonadaceae</taxon>
        <taxon>Zymomonas</taxon>
    </lineage>
</organism>
<dbReference type="EC" id="2.5.1.145" evidence="1"/>
<dbReference type="EMBL" id="AF212041">
    <property type="protein sequence ID" value="AAG02148.1"/>
    <property type="status" value="ALT_INIT"/>
    <property type="molecule type" value="Genomic_DNA"/>
</dbReference>
<dbReference type="EMBL" id="AE008692">
    <property type="protein sequence ID" value="AAV88915.2"/>
    <property type="molecule type" value="Genomic_DNA"/>
</dbReference>
<dbReference type="RefSeq" id="WP_011240228.1">
    <property type="nucleotide sequence ID" value="NZ_CP035711.1"/>
</dbReference>
<dbReference type="SMR" id="Q9FDM1"/>
<dbReference type="STRING" id="264203.ZMO0291"/>
<dbReference type="KEGG" id="zmo:ZMO0291"/>
<dbReference type="eggNOG" id="COG0682">
    <property type="taxonomic scope" value="Bacteria"/>
</dbReference>
<dbReference type="HOGENOM" id="CLU_013386_1_0_5"/>
<dbReference type="UniPathway" id="UPA00664"/>
<dbReference type="Proteomes" id="UP000001173">
    <property type="component" value="Chromosome"/>
</dbReference>
<dbReference type="GO" id="GO:0005886">
    <property type="term" value="C:plasma membrane"/>
    <property type="evidence" value="ECO:0007669"/>
    <property type="project" value="UniProtKB-SubCell"/>
</dbReference>
<dbReference type="GO" id="GO:0008961">
    <property type="term" value="F:phosphatidylglycerol-prolipoprotein diacylglyceryl transferase activity"/>
    <property type="evidence" value="ECO:0007669"/>
    <property type="project" value="UniProtKB-UniRule"/>
</dbReference>
<dbReference type="GO" id="GO:0042158">
    <property type="term" value="P:lipoprotein biosynthetic process"/>
    <property type="evidence" value="ECO:0007669"/>
    <property type="project" value="UniProtKB-UniRule"/>
</dbReference>
<dbReference type="HAMAP" id="MF_01147">
    <property type="entry name" value="Lgt"/>
    <property type="match status" value="1"/>
</dbReference>
<dbReference type="InterPro" id="IPR001640">
    <property type="entry name" value="Lgt"/>
</dbReference>
<dbReference type="NCBIfam" id="TIGR00544">
    <property type="entry name" value="lgt"/>
    <property type="match status" value="1"/>
</dbReference>
<dbReference type="PANTHER" id="PTHR30589:SF0">
    <property type="entry name" value="PHOSPHATIDYLGLYCEROL--PROLIPOPROTEIN DIACYLGLYCERYL TRANSFERASE"/>
    <property type="match status" value="1"/>
</dbReference>
<dbReference type="PANTHER" id="PTHR30589">
    <property type="entry name" value="PROLIPOPROTEIN DIACYLGLYCERYL TRANSFERASE"/>
    <property type="match status" value="1"/>
</dbReference>
<dbReference type="Pfam" id="PF01790">
    <property type="entry name" value="LGT"/>
    <property type="match status" value="1"/>
</dbReference>
<dbReference type="PROSITE" id="PS01311">
    <property type="entry name" value="LGT"/>
    <property type="match status" value="1"/>
</dbReference>